<gene>
    <name evidence="1" type="primary">trpA</name>
    <name type="ordered locus">SAB1228</name>
</gene>
<keyword id="KW-0028">Amino-acid biosynthesis</keyword>
<keyword id="KW-0057">Aromatic amino acid biosynthesis</keyword>
<keyword id="KW-0456">Lyase</keyword>
<keyword id="KW-0822">Tryptophan biosynthesis</keyword>
<proteinExistence type="inferred from homology"/>
<evidence type="ECO:0000255" key="1">
    <source>
        <dbReference type="HAMAP-Rule" id="MF_00131"/>
    </source>
</evidence>
<accession>Q2YXZ6</accession>
<reference key="1">
    <citation type="journal article" date="2007" name="PLoS ONE">
        <title>Molecular correlates of host specialization in Staphylococcus aureus.</title>
        <authorList>
            <person name="Herron-Olson L."/>
            <person name="Fitzgerald J.R."/>
            <person name="Musser J.M."/>
            <person name="Kapur V."/>
        </authorList>
    </citation>
    <scope>NUCLEOTIDE SEQUENCE [LARGE SCALE GENOMIC DNA]</scope>
    <source>
        <strain>bovine RF122 / ET3-1</strain>
    </source>
</reference>
<comment type="function">
    <text evidence="1">The alpha subunit is responsible for the aldol cleavage of indoleglycerol phosphate to indole and glyceraldehyde 3-phosphate.</text>
</comment>
<comment type="catalytic activity">
    <reaction evidence="1">
        <text>(1S,2R)-1-C-(indol-3-yl)glycerol 3-phosphate + L-serine = D-glyceraldehyde 3-phosphate + L-tryptophan + H2O</text>
        <dbReference type="Rhea" id="RHEA:10532"/>
        <dbReference type="ChEBI" id="CHEBI:15377"/>
        <dbReference type="ChEBI" id="CHEBI:33384"/>
        <dbReference type="ChEBI" id="CHEBI:57912"/>
        <dbReference type="ChEBI" id="CHEBI:58866"/>
        <dbReference type="ChEBI" id="CHEBI:59776"/>
        <dbReference type="EC" id="4.2.1.20"/>
    </reaction>
</comment>
<comment type="pathway">
    <text evidence="1">Amino-acid biosynthesis; L-tryptophan biosynthesis; L-tryptophan from chorismate: step 5/5.</text>
</comment>
<comment type="subunit">
    <text evidence="1">Tetramer of two alpha and two beta chains.</text>
</comment>
<comment type="similarity">
    <text evidence="1">Belongs to the TrpA family.</text>
</comment>
<dbReference type="EC" id="4.2.1.20" evidence="1"/>
<dbReference type="EMBL" id="AJ938182">
    <property type="protein sequence ID" value="CAI80917.1"/>
    <property type="molecule type" value="Genomic_DNA"/>
</dbReference>
<dbReference type="RefSeq" id="WP_000163611.1">
    <property type="nucleotide sequence ID" value="NC_007622.1"/>
</dbReference>
<dbReference type="SMR" id="Q2YXZ6"/>
<dbReference type="KEGG" id="sab:SAB1228"/>
<dbReference type="HOGENOM" id="CLU_016734_0_0_9"/>
<dbReference type="UniPathway" id="UPA00035">
    <property type="reaction ID" value="UER00044"/>
</dbReference>
<dbReference type="GO" id="GO:0005829">
    <property type="term" value="C:cytosol"/>
    <property type="evidence" value="ECO:0007669"/>
    <property type="project" value="TreeGrafter"/>
</dbReference>
<dbReference type="GO" id="GO:0004834">
    <property type="term" value="F:tryptophan synthase activity"/>
    <property type="evidence" value="ECO:0007669"/>
    <property type="project" value="UniProtKB-UniRule"/>
</dbReference>
<dbReference type="CDD" id="cd04724">
    <property type="entry name" value="Tryptophan_synthase_alpha"/>
    <property type="match status" value="1"/>
</dbReference>
<dbReference type="Gene3D" id="3.20.20.70">
    <property type="entry name" value="Aldolase class I"/>
    <property type="match status" value="1"/>
</dbReference>
<dbReference type="HAMAP" id="MF_00131">
    <property type="entry name" value="Trp_synth_alpha"/>
    <property type="match status" value="1"/>
</dbReference>
<dbReference type="InterPro" id="IPR013785">
    <property type="entry name" value="Aldolase_TIM"/>
</dbReference>
<dbReference type="InterPro" id="IPR011060">
    <property type="entry name" value="RibuloseP-bd_barrel"/>
</dbReference>
<dbReference type="InterPro" id="IPR018204">
    <property type="entry name" value="Trp_synthase_alpha_AS"/>
</dbReference>
<dbReference type="InterPro" id="IPR002028">
    <property type="entry name" value="Trp_synthase_suA"/>
</dbReference>
<dbReference type="NCBIfam" id="TIGR00262">
    <property type="entry name" value="trpA"/>
    <property type="match status" value="1"/>
</dbReference>
<dbReference type="PANTHER" id="PTHR43406:SF1">
    <property type="entry name" value="TRYPTOPHAN SYNTHASE ALPHA CHAIN, CHLOROPLASTIC"/>
    <property type="match status" value="1"/>
</dbReference>
<dbReference type="PANTHER" id="PTHR43406">
    <property type="entry name" value="TRYPTOPHAN SYNTHASE, ALPHA CHAIN"/>
    <property type="match status" value="1"/>
</dbReference>
<dbReference type="Pfam" id="PF00290">
    <property type="entry name" value="Trp_syntA"/>
    <property type="match status" value="1"/>
</dbReference>
<dbReference type="SUPFAM" id="SSF51366">
    <property type="entry name" value="Ribulose-phoshate binding barrel"/>
    <property type="match status" value="1"/>
</dbReference>
<dbReference type="PROSITE" id="PS00167">
    <property type="entry name" value="TRP_SYNTHASE_ALPHA"/>
    <property type="match status" value="1"/>
</dbReference>
<name>TRPA_STAAB</name>
<feature type="chain" id="PRO_1000018291" description="Tryptophan synthase alpha chain">
    <location>
        <begin position="1"/>
        <end position="242"/>
    </location>
</feature>
<feature type="active site" description="Proton acceptor" evidence="1">
    <location>
        <position position="31"/>
    </location>
</feature>
<feature type="active site" description="Proton acceptor" evidence="1">
    <location>
        <position position="42"/>
    </location>
</feature>
<sequence length="242" mass="27144">MTKLFIPYIMGDKDLIENATLLSENGADIIEIGVPFSDPVADGPVIMEAGQQAIKQGITIDYIFEQLEKHGNQIKCQYVLMTYYNIICHYGEQAFFEKCRDTGVYGLIIPDLPFELSQRLKQQFSHYGVKIISLVAMTTDDKRIKEIVSHAEGFIYTVTMNATTGQNGAFHPELKRKIESIKAIANVPVVAGFGIRTPQHVADIKEVADGIVIGSEIVKRFKSNTREEIIKYLQSIQQTLNN</sequence>
<organism>
    <name type="scientific">Staphylococcus aureus (strain bovine RF122 / ET3-1)</name>
    <dbReference type="NCBI Taxonomy" id="273036"/>
    <lineage>
        <taxon>Bacteria</taxon>
        <taxon>Bacillati</taxon>
        <taxon>Bacillota</taxon>
        <taxon>Bacilli</taxon>
        <taxon>Bacillales</taxon>
        <taxon>Staphylococcaceae</taxon>
        <taxon>Staphylococcus</taxon>
    </lineage>
</organism>
<protein>
    <recommendedName>
        <fullName evidence="1">Tryptophan synthase alpha chain</fullName>
        <ecNumber evidence="1">4.2.1.20</ecNumber>
    </recommendedName>
</protein>